<reference key="1">
    <citation type="journal article" date="2006" name="Genome Biol.">
        <title>Genomic analysis reveals that Pseudomonas aeruginosa virulence is combinatorial.</title>
        <authorList>
            <person name="Lee D.G."/>
            <person name="Urbach J.M."/>
            <person name="Wu G."/>
            <person name="Liberati N.T."/>
            <person name="Feinbaum R.L."/>
            <person name="Miyata S."/>
            <person name="Diggins L.T."/>
            <person name="He J."/>
            <person name="Saucier M."/>
            <person name="Deziel E."/>
            <person name="Friedman L."/>
            <person name="Li L."/>
            <person name="Grills G."/>
            <person name="Montgomery K."/>
            <person name="Kucherlapati R."/>
            <person name="Rahme L.G."/>
            <person name="Ausubel F.M."/>
        </authorList>
    </citation>
    <scope>NUCLEOTIDE SEQUENCE [LARGE SCALE GENOMIC DNA]</scope>
    <source>
        <strain>UCBPP-PA14</strain>
    </source>
</reference>
<keyword id="KW-0378">Hydrolase</keyword>
<comment type="function">
    <text evidence="1">Hydrolyzes diadenosine 5',5'''-P1,P4-tetraphosphate to yield ADP.</text>
</comment>
<comment type="catalytic activity">
    <reaction evidence="1">
        <text>P(1),P(4)-bis(5'-adenosyl) tetraphosphate + H2O = 2 ADP + 2 H(+)</text>
        <dbReference type="Rhea" id="RHEA:24252"/>
        <dbReference type="ChEBI" id="CHEBI:15377"/>
        <dbReference type="ChEBI" id="CHEBI:15378"/>
        <dbReference type="ChEBI" id="CHEBI:58141"/>
        <dbReference type="ChEBI" id="CHEBI:456216"/>
        <dbReference type="EC" id="3.6.1.41"/>
    </reaction>
</comment>
<comment type="similarity">
    <text evidence="1">Belongs to the Ap4A hydrolase family.</text>
</comment>
<gene>
    <name evidence="1" type="primary">apaH</name>
    <name type="ordered locus">PA14_07700</name>
</gene>
<dbReference type="EC" id="3.6.1.41" evidence="1"/>
<dbReference type="EMBL" id="CP000438">
    <property type="protein sequence ID" value="ABJ15554.1"/>
    <property type="molecule type" value="Genomic_DNA"/>
</dbReference>
<dbReference type="RefSeq" id="WP_003113213.1">
    <property type="nucleotide sequence ID" value="NZ_CP034244.1"/>
</dbReference>
<dbReference type="SMR" id="Q02TH3"/>
<dbReference type="KEGG" id="pau:PA14_07700"/>
<dbReference type="PseudoCAP" id="PA14_07700"/>
<dbReference type="HOGENOM" id="CLU_056184_2_0_6"/>
<dbReference type="BioCyc" id="PAER208963:G1G74-635-MONOMER"/>
<dbReference type="Proteomes" id="UP000000653">
    <property type="component" value="Chromosome"/>
</dbReference>
<dbReference type="GO" id="GO:0008803">
    <property type="term" value="F:bis(5'-nucleosyl)-tetraphosphatase (symmetrical) activity"/>
    <property type="evidence" value="ECO:0007669"/>
    <property type="project" value="UniProtKB-UniRule"/>
</dbReference>
<dbReference type="CDD" id="cd07422">
    <property type="entry name" value="MPP_ApaH"/>
    <property type="match status" value="1"/>
</dbReference>
<dbReference type="Gene3D" id="3.60.21.10">
    <property type="match status" value="1"/>
</dbReference>
<dbReference type="HAMAP" id="MF_00199">
    <property type="entry name" value="ApaH"/>
    <property type="match status" value="1"/>
</dbReference>
<dbReference type="InterPro" id="IPR004617">
    <property type="entry name" value="ApaH"/>
</dbReference>
<dbReference type="InterPro" id="IPR004843">
    <property type="entry name" value="Calcineurin-like_PHP_ApaH"/>
</dbReference>
<dbReference type="InterPro" id="IPR029052">
    <property type="entry name" value="Metallo-depent_PP-like"/>
</dbReference>
<dbReference type="NCBIfam" id="TIGR00668">
    <property type="entry name" value="apaH"/>
    <property type="match status" value="1"/>
</dbReference>
<dbReference type="NCBIfam" id="NF001204">
    <property type="entry name" value="PRK00166.1"/>
    <property type="match status" value="1"/>
</dbReference>
<dbReference type="PANTHER" id="PTHR40942">
    <property type="match status" value="1"/>
</dbReference>
<dbReference type="PANTHER" id="PTHR40942:SF4">
    <property type="entry name" value="CYTOCHROME C5"/>
    <property type="match status" value="1"/>
</dbReference>
<dbReference type="Pfam" id="PF00149">
    <property type="entry name" value="Metallophos"/>
    <property type="match status" value="1"/>
</dbReference>
<dbReference type="PIRSF" id="PIRSF000903">
    <property type="entry name" value="B5n-ttraPtase_sm"/>
    <property type="match status" value="1"/>
</dbReference>
<dbReference type="SUPFAM" id="SSF56300">
    <property type="entry name" value="Metallo-dependent phosphatases"/>
    <property type="match status" value="1"/>
</dbReference>
<sequence length="283" mass="32019">MAVYAVGDLQGCLDPLKCLLERVAFDPAKDRLWLVGDLVNRGPQSLETLRFLYAMRESVVSVLGNHDLHLLAVAHKSERLKKSDTLREILEAPDREPLLDWLRRLPLLHYDEQRKVALVHAGIPPQWSLEKARLRAAEVEQALRDDQRLPLFLDGMYGNEPAKWDKKLHGIDRLRVITNYFTRMRFCTEDGKLDLKSKEGLDTAPPGYAPWFSFPSRKTRGEKIIFGHWAALEGHCDEPGLFALDTGCVWGARMTLLNVDSGERLSCDCAEQRAPARPAATPA</sequence>
<organism>
    <name type="scientific">Pseudomonas aeruginosa (strain UCBPP-PA14)</name>
    <dbReference type="NCBI Taxonomy" id="208963"/>
    <lineage>
        <taxon>Bacteria</taxon>
        <taxon>Pseudomonadati</taxon>
        <taxon>Pseudomonadota</taxon>
        <taxon>Gammaproteobacteria</taxon>
        <taxon>Pseudomonadales</taxon>
        <taxon>Pseudomonadaceae</taxon>
        <taxon>Pseudomonas</taxon>
    </lineage>
</organism>
<evidence type="ECO:0000255" key="1">
    <source>
        <dbReference type="HAMAP-Rule" id="MF_00199"/>
    </source>
</evidence>
<protein>
    <recommendedName>
        <fullName evidence="1">Bis(5'-nucleosyl)-tetraphosphatase, symmetrical</fullName>
        <ecNumber evidence="1">3.6.1.41</ecNumber>
    </recommendedName>
    <alternativeName>
        <fullName evidence="1">Ap4A hydrolase</fullName>
    </alternativeName>
    <alternativeName>
        <fullName evidence="1">Diadenosine 5',5'''-P1,P4-tetraphosphate pyrophosphohydrolase</fullName>
    </alternativeName>
    <alternativeName>
        <fullName evidence="1">Diadenosine tetraphosphatase</fullName>
    </alternativeName>
</protein>
<proteinExistence type="inferred from homology"/>
<name>APAH_PSEAB</name>
<feature type="chain" id="PRO_1000012076" description="Bis(5'-nucleosyl)-tetraphosphatase, symmetrical">
    <location>
        <begin position="1"/>
        <end position="283"/>
    </location>
</feature>
<accession>Q02TH3</accession>